<evidence type="ECO:0000255" key="1">
    <source>
        <dbReference type="HAMAP-Rule" id="MF_00786"/>
    </source>
</evidence>
<sequence length="187" mass="20313">MLNDMDFIKTCDVPGPTKEAIRAIILYKSAVTPNDEVVDVGCGTGGITCEFAQRAKKVTSIDTNPDAISVTKQNLEKFNLGDNVELINDSGSNALKNIDNMDIAVVGGSGRELEDILEIIDSKLNPKGRIIVTAILVDTKIEAINKLKKLNYNPKIMEVNISNGRVLDRGVMMISENPIAIISANKR</sequence>
<feature type="chain" id="PRO_1000046844" description="Probable cobalt-precorrin-6B C(15)-methyltransferase (decarboxylating)">
    <location>
        <begin position="1"/>
        <end position="187"/>
    </location>
</feature>
<feature type="binding site" evidence="1">
    <location>
        <position position="17"/>
    </location>
    <ligand>
        <name>S-adenosyl-L-methionine</name>
        <dbReference type="ChEBI" id="CHEBI:59789"/>
    </ligand>
</feature>
<feature type="binding site" evidence="1">
    <location>
        <begin position="41"/>
        <end position="45"/>
    </location>
    <ligand>
        <name>S-adenosyl-L-methionine</name>
        <dbReference type="ChEBI" id="CHEBI:59789"/>
    </ligand>
</feature>
<feature type="binding site" evidence="1">
    <location>
        <position position="62"/>
    </location>
    <ligand>
        <name>S-adenosyl-L-methionine</name>
        <dbReference type="ChEBI" id="CHEBI:59789"/>
    </ligand>
</feature>
<feature type="binding site" evidence="1">
    <location>
        <position position="91"/>
    </location>
    <ligand>
        <name>S-adenosyl-L-methionine</name>
        <dbReference type="ChEBI" id="CHEBI:59789"/>
    </ligand>
</feature>
<gene>
    <name evidence="1" type="primary">cbiT</name>
    <name type="ordered locus">Msm_0238</name>
</gene>
<accession>A5UJR5</accession>
<protein>
    <recommendedName>
        <fullName evidence="1">Probable cobalt-precorrin-6B C(15)-methyltransferase (decarboxylating)</fullName>
        <ecNumber evidence="1">2.1.1.196</ecNumber>
    </recommendedName>
</protein>
<keyword id="KW-0169">Cobalamin biosynthesis</keyword>
<keyword id="KW-0489">Methyltransferase</keyword>
<keyword id="KW-0949">S-adenosyl-L-methionine</keyword>
<keyword id="KW-0808">Transferase</keyword>
<organism>
    <name type="scientific">Methanobrevibacter smithii (strain ATCC 35061 / DSM 861 / OCM 144 / PS)</name>
    <dbReference type="NCBI Taxonomy" id="420247"/>
    <lineage>
        <taxon>Archaea</taxon>
        <taxon>Methanobacteriati</taxon>
        <taxon>Methanobacteriota</taxon>
        <taxon>Methanomada group</taxon>
        <taxon>Methanobacteria</taxon>
        <taxon>Methanobacteriales</taxon>
        <taxon>Methanobacteriaceae</taxon>
        <taxon>Methanobrevibacter</taxon>
    </lineage>
</organism>
<comment type="function">
    <text evidence="1">Catalyzes the methylation of C-15 in cobalt-precorrin-6B followed by the decarboxylation of C-12 to form cobalt-precorrin-7.</text>
</comment>
<comment type="catalytic activity">
    <reaction evidence="1">
        <text>Co-precorrin-6B + S-adenosyl-L-methionine = Co-precorrin-7 + S-adenosyl-L-homocysteine + CO2</text>
        <dbReference type="Rhea" id="RHEA:36067"/>
        <dbReference type="ChEBI" id="CHEBI:16526"/>
        <dbReference type="ChEBI" id="CHEBI:57856"/>
        <dbReference type="ChEBI" id="CHEBI:59789"/>
        <dbReference type="ChEBI" id="CHEBI:70791"/>
        <dbReference type="ChEBI" id="CHEBI:72780"/>
        <dbReference type="EC" id="2.1.1.196"/>
    </reaction>
</comment>
<comment type="pathway">
    <text evidence="1">Cofactor biosynthesis; adenosylcobalamin biosynthesis; cob(II)yrinate a,c-diamide from sirohydrochlorin (anaerobic route): step 8/10.</text>
</comment>
<comment type="similarity">
    <text evidence="1">Belongs to the methyltransferase superfamily. Archaeal-type CbiT family.</text>
</comment>
<name>CBIT_METS3</name>
<proteinExistence type="inferred from homology"/>
<dbReference type="EC" id="2.1.1.196" evidence="1"/>
<dbReference type="EMBL" id="CP000678">
    <property type="protein sequence ID" value="ABQ86443.1"/>
    <property type="molecule type" value="Genomic_DNA"/>
</dbReference>
<dbReference type="RefSeq" id="WP_004034305.1">
    <property type="nucleotide sequence ID" value="NZ_CP117965.1"/>
</dbReference>
<dbReference type="SMR" id="A5UJR5"/>
<dbReference type="STRING" id="420247.Msm_0238"/>
<dbReference type="EnsemblBacteria" id="ABQ86443">
    <property type="protein sequence ID" value="ABQ86443"/>
    <property type="gene ID" value="Msm_0238"/>
</dbReference>
<dbReference type="GeneID" id="78816861"/>
<dbReference type="KEGG" id="msi:Msm_0238"/>
<dbReference type="PATRIC" id="fig|420247.28.peg.241"/>
<dbReference type="eggNOG" id="arCOG00977">
    <property type="taxonomic scope" value="Archaea"/>
</dbReference>
<dbReference type="HOGENOM" id="CLU_094143_0_0_2"/>
<dbReference type="UniPathway" id="UPA00148">
    <property type="reaction ID" value="UER00229"/>
</dbReference>
<dbReference type="Proteomes" id="UP000001992">
    <property type="component" value="Chromosome"/>
</dbReference>
<dbReference type="GO" id="GO:0043776">
    <property type="term" value="F:cobalt-precorrin-6B C5-methyltransferase activity"/>
    <property type="evidence" value="ECO:0007669"/>
    <property type="project" value="RHEA"/>
</dbReference>
<dbReference type="GO" id="GO:0008276">
    <property type="term" value="F:protein methyltransferase activity"/>
    <property type="evidence" value="ECO:0007669"/>
    <property type="project" value="InterPro"/>
</dbReference>
<dbReference type="GO" id="GO:0019251">
    <property type="term" value="P:anaerobic cobalamin biosynthetic process"/>
    <property type="evidence" value="ECO:0007669"/>
    <property type="project" value="UniProtKB-UniRule"/>
</dbReference>
<dbReference type="GO" id="GO:0032259">
    <property type="term" value="P:methylation"/>
    <property type="evidence" value="ECO:0007669"/>
    <property type="project" value="UniProtKB-KW"/>
</dbReference>
<dbReference type="CDD" id="cd02440">
    <property type="entry name" value="AdoMet_MTases"/>
    <property type="match status" value="1"/>
</dbReference>
<dbReference type="Gene3D" id="3.40.50.150">
    <property type="entry name" value="Vaccinia Virus protein VP39"/>
    <property type="match status" value="1"/>
</dbReference>
<dbReference type="HAMAP" id="MF_00786">
    <property type="entry name" value="CbiT"/>
    <property type="match status" value="1"/>
</dbReference>
<dbReference type="InterPro" id="IPR023475">
    <property type="entry name" value="CbiT"/>
</dbReference>
<dbReference type="InterPro" id="IPR014008">
    <property type="entry name" value="Cbl_synth_MTase_CbiT"/>
</dbReference>
<dbReference type="InterPro" id="IPR050714">
    <property type="entry name" value="Cobalamin_biosynth_MTase"/>
</dbReference>
<dbReference type="InterPro" id="IPR025714">
    <property type="entry name" value="Methyltranfer_dom"/>
</dbReference>
<dbReference type="InterPro" id="IPR029063">
    <property type="entry name" value="SAM-dependent_MTases_sf"/>
</dbReference>
<dbReference type="NCBIfam" id="TIGR02469">
    <property type="entry name" value="CbiT"/>
    <property type="match status" value="1"/>
</dbReference>
<dbReference type="PANTHER" id="PTHR43182">
    <property type="entry name" value="COBALT-PRECORRIN-6B C(15)-METHYLTRANSFERASE (DECARBOXYLATING)"/>
    <property type="match status" value="1"/>
</dbReference>
<dbReference type="PANTHER" id="PTHR43182:SF1">
    <property type="entry name" value="COBALT-PRECORRIN-7 C(5)-METHYLTRANSFERASE"/>
    <property type="match status" value="1"/>
</dbReference>
<dbReference type="Pfam" id="PF13847">
    <property type="entry name" value="Methyltransf_31"/>
    <property type="match status" value="1"/>
</dbReference>
<dbReference type="SUPFAM" id="SSF53335">
    <property type="entry name" value="S-adenosyl-L-methionine-dependent methyltransferases"/>
    <property type="match status" value="1"/>
</dbReference>
<reference key="1">
    <citation type="journal article" date="2007" name="Proc. Natl. Acad. Sci. U.S.A.">
        <title>Genomic and metabolic adaptations of Methanobrevibacter smithii to the human gut.</title>
        <authorList>
            <person name="Samuel B.S."/>
            <person name="Hansen E.E."/>
            <person name="Manchester J.K."/>
            <person name="Coutinho P.M."/>
            <person name="Henrissat B."/>
            <person name="Fulton R."/>
            <person name="Latreille P."/>
            <person name="Kim K."/>
            <person name="Wilson R.K."/>
            <person name="Gordon J.I."/>
        </authorList>
    </citation>
    <scope>NUCLEOTIDE SEQUENCE [LARGE SCALE GENOMIC DNA]</scope>
    <source>
        <strain>ATCC 35061 / DSM 861 / OCM 144 / PS</strain>
    </source>
</reference>